<dbReference type="EMBL" id="CP001029">
    <property type="protein sequence ID" value="ACB78707.1"/>
    <property type="molecule type" value="Genomic_DNA"/>
</dbReference>
<dbReference type="RefSeq" id="WP_003599981.1">
    <property type="nucleotide sequence ID" value="NC_010725.1"/>
</dbReference>
<dbReference type="SMR" id="B1ZK55"/>
<dbReference type="STRING" id="441620.Mpop_0529"/>
<dbReference type="KEGG" id="mpo:Mpop_0529"/>
<dbReference type="eggNOG" id="COG0236">
    <property type="taxonomic scope" value="Bacteria"/>
</dbReference>
<dbReference type="HOGENOM" id="CLU_108696_5_1_5"/>
<dbReference type="OrthoDB" id="9804551at2"/>
<dbReference type="UniPathway" id="UPA00094"/>
<dbReference type="Proteomes" id="UP000007136">
    <property type="component" value="Chromosome"/>
</dbReference>
<dbReference type="GO" id="GO:0005829">
    <property type="term" value="C:cytosol"/>
    <property type="evidence" value="ECO:0007669"/>
    <property type="project" value="TreeGrafter"/>
</dbReference>
<dbReference type="GO" id="GO:0016020">
    <property type="term" value="C:membrane"/>
    <property type="evidence" value="ECO:0007669"/>
    <property type="project" value="GOC"/>
</dbReference>
<dbReference type="GO" id="GO:0000035">
    <property type="term" value="F:acyl binding"/>
    <property type="evidence" value="ECO:0007669"/>
    <property type="project" value="TreeGrafter"/>
</dbReference>
<dbReference type="GO" id="GO:0000036">
    <property type="term" value="F:acyl carrier activity"/>
    <property type="evidence" value="ECO:0007669"/>
    <property type="project" value="UniProtKB-UniRule"/>
</dbReference>
<dbReference type="GO" id="GO:0031177">
    <property type="term" value="F:phosphopantetheine binding"/>
    <property type="evidence" value="ECO:0007669"/>
    <property type="project" value="InterPro"/>
</dbReference>
<dbReference type="GO" id="GO:0009245">
    <property type="term" value="P:lipid A biosynthetic process"/>
    <property type="evidence" value="ECO:0007669"/>
    <property type="project" value="TreeGrafter"/>
</dbReference>
<dbReference type="FunFam" id="1.10.1200.10:FF:000001">
    <property type="entry name" value="Acyl carrier protein"/>
    <property type="match status" value="1"/>
</dbReference>
<dbReference type="Gene3D" id="1.10.1200.10">
    <property type="entry name" value="ACP-like"/>
    <property type="match status" value="1"/>
</dbReference>
<dbReference type="HAMAP" id="MF_01217">
    <property type="entry name" value="Acyl_carrier"/>
    <property type="match status" value="1"/>
</dbReference>
<dbReference type="InterPro" id="IPR003231">
    <property type="entry name" value="ACP"/>
</dbReference>
<dbReference type="InterPro" id="IPR036736">
    <property type="entry name" value="ACP-like_sf"/>
</dbReference>
<dbReference type="InterPro" id="IPR020806">
    <property type="entry name" value="PKS_PP-bd"/>
</dbReference>
<dbReference type="InterPro" id="IPR009081">
    <property type="entry name" value="PP-bd_ACP"/>
</dbReference>
<dbReference type="InterPro" id="IPR006162">
    <property type="entry name" value="Ppantetheine_attach_site"/>
</dbReference>
<dbReference type="NCBIfam" id="TIGR00517">
    <property type="entry name" value="acyl_carrier"/>
    <property type="match status" value="1"/>
</dbReference>
<dbReference type="NCBIfam" id="NF002148">
    <property type="entry name" value="PRK00982.1-2"/>
    <property type="match status" value="1"/>
</dbReference>
<dbReference type="NCBIfam" id="NF002149">
    <property type="entry name" value="PRK00982.1-3"/>
    <property type="match status" value="1"/>
</dbReference>
<dbReference type="NCBIfam" id="NF002150">
    <property type="entry name" value="PRK00982.1-4"/>
    <property type="match status" value="1"/>
</dbReference>
<dbReference type="NCBIfam" id="NF002151">
    <property type="entry name" value="PRK00982.1-5"/>
    <property type="match status" value="1"/>
</dbReference>
<dbReference type="PANTHER" id="PTHR20863">
    <property type="entry name" value="ACYL CARRIER PROTEIN"/>
    <property type="match status" value="1"/>
</dbReference>
<dbReference type="PANTHER" id="PTHR20863:SF76">
    <property type="entry name" value="CARRIER DOMAIN-CONTAINING PROTEIN"/>
    <property type="match status" value="1"/>
</dbReference>
<dbReference type="Pfam" id="PF00550">
    <property type="entry name" value="PP-binding"/>
    <property type="match status" value="1"/>
</dbReference>
<dbReference type="SMART" id="SM00823">
    <property type="entry name" value="PKS_PP"/>
    <property type="match status" value="1"/>
</dbReference>
<dbReference type="SUPFAM" id="SSF47336">
    <property type="entry name" value="ACP-like"/>
    <property type="match status" value="1"/>
</dbReference>
<dbReference type="PROSITE" id="PS50075">
    <property type="entry name" value="CARRIER"/>
    <property type="match status" value="1"/>
</dbReference>
<dbReference type="PROSITE" id="PS00012">
    <property type="entry name" value="PHOSPHOPANTETHEINE"/>
    <property type="match status" value="1"/>
</dbReference>
<feature type="chain" id="PRO_1000139042" description="Acyl carrier protein">
    <location>
        <begin position="1"/>
        <end position="78"/>
    </location>
</feature>
<feature type="domain" description="Carrier" evidence="2">
    <location>
        <begin position="2"/>
        <end position="77"/>
    </location>
</feature>
<feature type="modified residue" description="O-(pantetheine 4'-phosphoryl)serine" evidence="2">
    <location>
        <position position="37"/>
    </location>
</feature>
<gene>
    <name evidence="1" type="primary">acpP</name>
    <name type="ordered locus">Mpop_0529</name>
</gene>
<organism>
    <name type="scientific">Methylorubrum populi (strain ATCC BAA-705 / NCIMB 13946 / BJ001)</name>
    <name type="common">Methylobacterium populi</name>
    <dbReference type="NCBI Taxonomy" id="441620"/>
    <lineage>
        <taxon>Bacteria</taxon>
        <taxon>Pseudomonadati</taxon>
        <taxon>Pseudomonadota</taxon>
        <taxon>Alphaproteobacteria</taxon>
        <taxon>Hyphomicrobiales</taxon>
        <taxon>Methylobacteriaceae</taxon>
        <taxon>Methylorubrum</taxon>
    </lineage>
</organism>
<name>ACP_METPB</name>
<accession>B1ZK55</accession>
<proteinExistence type="inferred from homology"/>
<protein>
    <recommendedName>
        <fullName evidence="1">Acyl carrier protein</fullName>
        <shortName evidence="1">ACP</shortName>
    </recommendedName>
</protein>
<evidence type="ECO:0000255" key="1">
    <source>
        <dbReference type="HAMAP-Rule" id="MF_01217"/>
    </source>
</evidence>
<evidence type="ECO:0000255" key="2">
    <source>
        <dbReference type="PROSITE-ProRule" id="PRU00258"/>
    </source>
</evidence>
<keyword id="KW-0963">Cytoplasm</keyword>
<keyword id="KW-0275">Fatty acid biosynthesis</keyword>
<keyword id="KW-0276">Fatty acid metabolism</keyword>
<keyword id="KW-0444">Lipid biosynthesis</keyword>
<keyword id="KW-0443">Lipid metabolism</keyword>
<keyword id="KW-0596">Phosphopantetheine</keyword>
<keyword id="KW-0597">Phosphoprotein</keyword>
<sequence>MSDIAERVKKIVVEHLGVEPEKVTEASNFIDDLGADSLDTVELVMAFEEEFNVEIPDDAAETIQTVGDAIKFLEKNSA</sequence>
<reference key="1">
    <citation type="submission" date="2008-04" db="EMBL/GenBank/DDBJ databases">
        <title>Complete sequence of chromosome of Methylobacterium populi BJ001.</title>
        <authorList>
            <consortium name="US DOE Joint Genome Institute"/>
            <person name="Copeland A."/>
            <person name="Lucas S."/>
            <person name="Lapidus A."/>
            <person name="Glavina del Rio T."/>
            <person name="Dalin E."/>
            <person name="Tice H."/>
            <person name="Bruce D."/>
            <person name="Goodwin L."/>
            <person name="Pitluck S."/>
            <person name="Chertkov O."/>
            <person name="Brettin T."/>
            <person name="Detter J.C."/>
            <person name="Han C."/>
            <person name="Kuske C.R."/>
            <person name="Schmutz J."/>
            <person name="Larimer F."/>
            <person name="Land M."/>
            <person name="Hauser L."/>
            <person name="Kyrpides N."/>
            <person name="Mikhailova N."/>
            <person name="Marx C."/>
            <person name="Richardson P."/>
        </authorList>
    </citation>
    <scope>NUCLEOTIDE SEQUENCE [LARGE SCALE GENOMIC DNA]</scope>
    <source>
        <strain>ATCC BAA-705 / NCIMB 13946 / BJ001</strain>
    </source>
</reference>
<comment type="function">
    <text evidence="1">Carrier of the growing fatty acid chain in fatty acid biosynthesis.</text>
</comment>
<comment type="pathway">
    <text evidence="1">Lipid metabolism; fatty acid biosynthesis.</text>
</comment>
<comment type="subcellular location">
    <subcellularLocation>
        <location evidence="1">Cytoplasm</location>
    </subcellularLocation>
</comment>
<comment type="PTM">
    <text evidence="1">4'-phosphopantetheine is transferred from CoA to a specific serine of apo-ACP by AcpS. This modification is essential for activity because fatty acids are bound in thioester linkage to the sulfhydryl of the prosthetic group.</text>
</comment>
<comment type="similarity">
    <text evidence="1">Belongs to the acyl carrier protein (ACP) family.</text>
</comment>